<accession>Q9QYU3</accession>
<keyword id="KW-1003">Cell membrane</keyword>
<keyword id="KW-0407">Ion channel</keyword>
<keyword id="KW-0406">Ion transport</keyword>
<keyword id="KW-0472">Membrane</keyword>
<keyword id="KW-0630">Potassium</keyword>
<keyword id="KW-0631">Potassium channel</keyword>
<keyword id="KW-0633">Potassium transport</keyword>
<keyword id="KW-1185">Reference proteome</keyword>
<keyword id="KW-0812">Transmembrane</keyword>
<keyword id="KW-1133">Transmembrane helix</keyword>
<keyword id="KW-0813">Transport</keyword>
<keyword id="KW-0851">Voltage-gated channel</keyword>
<feature type="chain" id="PRO_0000054075" description="Voltage-gated potassium channel regulatory subunit KCNG2">
    <location>
        <begin position="1"/>
        <end position="480"/>
    </location>
</feature>
<feature type="topological domain" description="Cytoplasmic" evidence="1">
    <location>
        <begin position="1"/>
        <end position="187"/>
    </location>
</feature>
<feature type="transmembrane region" description="Helical; Name=Segment S1" evidence="1">
    <location>
        <begin position="188"/>
        <end position="209"/>
    </location>
</feature>
<feature type="topological domain" description="Extracellular" evidence="1">
    <location>
        <begin position="210"/>
        <end position="230"/>
    </location>
</feature>
<feature type="transmembrane region" description="Helical; Name=Segment S2" evidence="1">
    <location>
        <begin position="231"/>
        <end position="252"/>
    </location>
</feature>
<feature type="topological domain" description="Cytoplasmic" evidence="1">
    <location>
        <begin position="253"/>
        <end position="263"/>
    </location>
</feature>
<feature type="transmembrane region" description="Helical; Name=Segment S3" evidence="1">
    <location>
        <begin position="264"/>
        <end position="284"/>
    </location>
</feature>
<feature type="topological domain" description="Extracellular" evidence="1">
    <location>
        <begin position="285"/>
        <end position="296"/>
    </location>
</feature>
<feature type="transmembrane region" description="Helical; Voltage-sensor; Name=Segment S4" evidence="1">
    <location>
        <begin position="297"/>
        <end position="317"/>
    </location>
</feature>
<feature type="topological domain" description="Cytoplasmic" evidence="1">
    <location>
        <begin position="318"/>
        <end position="332"/>
    </location>
</feature>
<feature type="transmembrane region" description="Helical; Name=Segment S5" evidence="1">
    <location>
        <begin position="333"/>
        <end position="354"/>
    </location>
</feature>
<feature type="topological domain" description="Extracellular" evidence="1">
    <location>
        <begin position="355"/>
        <end position="369"/>
    </location>
</feature>
<feature type="intramembrane region" description="Helical; Name=Pore helix" evidence="1">
    <location>
        <begin position="370"/>
        <end position="381"/>
    </location>
</feature>
<feature type="intramembrane region" evidence="1">
    <location>
        <begin position="382"/>
        <end position="389"/>
    </location>
</feature>
<feature type="topological domain" description="Extracellular" evidence="1">
    <location>
        <begin position="390"/>
        <end position="396"/>
    </location>
</feature>
<feature type="transmembrane region" description="Helical; Name=Segment S6" evidence="1">
    <location>
        <begin position="397"/>
        <end position="425"/>
    </location>
</feature>
<feature type="topological domain" description="Cytoplasmic" evidence="1">
    <location>
        <begin position="426"/>
        <end position="480"/>
    </location>
</feature>
<feature type="region of interest" description="Disordered" evidence="4">
    <location>
        <begin position="1"/>
        <end position="25"/>
    </location>
</feature>
<feature type="region of interest" description="Disordered" evidence="4">
    <location>
        <begin position="144"/>
        <end position="167"/>
    </location>
</feature>
<feature type="region of interest" description="Disordered" evidence="4">
    <location>
        <begin position="429"/>
        <end position="480"/>
    </location>
</feature>
<feature type="short sequence motif" description="Selectivity filter" evidence="1">
    <location>
        <begin position="382"/>
        <end position="387"/>
    </location>
</feature>
<feature type="compositionally biased region" description="Basic and acidic residues" evidence="4">
    <location>
        <begin position="441"/>
        <end position="452"/>
    </location>
</feature>
<name>KCNG2_RAT</name>
<reference key="1">
    <citation type="journal article" date="1999" name="Recept. Channels">
        <title>Structural and functional characterization of Kv6.2, a new gamma-subunit of voltage-gated potassium channel.</title>
        <authorList>
            <person name="Zhu X.-R."/>
            <person name="Netzer R."/>
            <person name="Boehlke K."/>
            <person name="Liu Q."/>
            <person name="Pongs O."/>
        </authorList>
    </citation>
    <scope>NUCLEOTIDE SEQUENCE [MRNA]</scope>
    <scope>FUNCTION</scope>
    <scope>TISSUE SPECIFICITY</scope>
    <source>
        <tissue>Brain cortex</tissue>
    </source>
</reference>
<proteinExistence type="evidence at transcript level"/>
<evidence type="ECO:0000250" key="1">
    <source>
        <dbReference type="UniProtKB" id="P63142"/>
    </source>
</evidence>
<evidence type="ECO:0000250" key="2">
    <source>
        <dbReference type="UniProtKB" id="Q14721"/>
    </source>
</evidence>
<evidence type="ECO:0000250" key="3">
    <source>
        <dbReference type="UniProtKB" id="Q9UJ96"/>
    </source>
</evidence>
<evidence type="ECO:0000256" key="4">
    <source>
        <dbReference type="SAM" id="MobiDB-lite"/>
    </source>
</evidence>
<evidence type="ECO:0000269" key="5">
    <source>
    </source>
</evidence>
<evidence type="ECO:0000305" key="6"/>
<evidence type="ECO:0000312" key="7">
    <source>
        <dbReference type="RGD" id="1309521"/>
    </source>
</evidence>
<comment type="function">
    <text evidence="5">Regulatory alpha-subunit of the voltage-gated potassium (Kv) channel which, when coassembled with KCNB1, can modulate the kinetics and conductance-voltage relationship (PubMed:10551266). Modulates channel activity by shifting the threshold and the half-maximal activation to more negative values (PubMed:10551266). Potassium channel subunit that does not form functional channels by itself (PubMed:10551266).</text>
</comment>
<comment type="subunit">
    <text evidence="3">Heterodimer with KCNB1.</text>
</comment>
<comment type="subcellular location">
    <subcellularLocation>
        <location evidence="2">Cell membrane</location>
        <topology evidence="1">Multi-pass membrane protein</topology>
    </subcellularLocation>
</comment>
<comment type="tissue specificity">
    <text evidence="5">Highly expressed in heart, in particular in right and left atrium, and detected at lower levels in the right and left ventricle.</text>
</comment>
<comment type="similarity">
    <text evidence="6">Belongs to the potassium channel family. G (TC 1.A.1.2) subfamily. Kv6.2/KCNG2 sub-subfamily.</text>
</comment>
<protein>
    <recommendedName>
        <fullName evidence="6">Voltage-gated potassium channel regulatory subunit KCNG2</fullName>
    </recommendedName>
    <alternativeName>
        <fullName>Cardiac potassium channel subunit</fullName>
    </alternativeName>
    <alternativeName>
        <fullName>Potassium voltage-gated channel subfamily G member 2</fullName>
    </alternativeName>
    <alternativeName>
        <fullName>Voltage-gated potassium channel subunit Kv6.2</fullName>
    </alternativeName>
</protein>
<organism>
    <name type="scientific">Rattus norvegicus</name>
    <name type="common">Rat</name>
    <dbReference type="NCBI Taxonomy" id="10116"/>
    <lineage>
        <taxon>Eukaryota</taxon>
        <taxon>Metazoa</taxon>
        <taxon>Chordata</taxon>
        <taxon>Craniata</taxon>
        <taxon>Vertebrata</taxon>
        <taxon>Euteleostomi</taxon>
        <taxon>Mammalia</taxon>
        <taxon>Eutheria</taxon>
        <taxon>Euarchontoglires</taxon>
        <taxon>Glires</taxon>
        <taxon>Rodentia</taxon>
        <taxon>Myomorpha</taxon>
        <taxon>Muroidea</taxon>
        <taxon>Muridae</taxon>
        <taxon>Murinae</taxon>
        <taxon>Rattus</taxon>
    </lineage>
</organism>
<gene>
    <name evidence="7" type="primary">Kcng2</name>
</gene>
<dbReference type="EMBL" id="AJ011020">
    <property type="protein sequence ID" value="CAB56852.1"/>
    <property type="molecule type" value="mRNA"/>
</dbReference>
<dbReference type="RefSeq" id="NP_001100842.1">
    <property type="nucleotide sequence ID" value="NM_001107372.1"/>
</dbReference>
<dbReference type="RefSeq" id="XP_006255009.1">
    <property type="nucleotide sequence ID" value="XM_006254947.4"/>
</dbReference>
<dbReference type="RefSeq" id="XP_006255010.1">
    <property type="nucleotide sequence ID" value="XM_006254948.5"/>
</dbReference>
<dbReference type="RefSeq" id="XP_006255012.1">
    <property type="nucleotide sequence ID" value="XM_006254950.3"/>
</dbReference>
<dbReference type="RefSeq" id="XP_008770358.1">
    <property type="nucleotide sequence ID" value="XM_008772136.4"/>
</dbReference>
<dbReference type="RefSeq" id="XP_008770359.1">
    <property type="nucleotide sequence ID" value="XM_008772137.2"/>
</dbReference>
<dbReference type="RefSeq" id="XP_017456433.1">
    <property type="nucleotide sequence ID" value="XM_017600944.3"/>
</dbReference>
<dbReference type="RefSeq" id="XP_038952699.1">
    <property type="nucleotide sequence ID" value="XM_039096771.2"/>
</dbReference>
<dbReference type="SMR" id="Q9QYU3"/>
<dbReference type="FunCoup" id="Q9QYU3">
    <property type="interactions" value="3"/>
</dbReference>
<dbReference type="STRING" id="10116.ENSRNOP00000069556"/>
<dbReference type="GlyGen" id="Q9QYU3">
    <property type="glycosylation" value="1 site"/>
</dbReference>
<dbReference type="iPTMnet" id="Q9QYU3"/>
<dbReference type="PhosphoSitePlus" id="Q9QYU3"/>
<dbReference type="PaxDb" id="10116-ENSRNOP00000023089"/>
<dbReference type="Ensembl" id="ENSRNOT00000088054.2">
    <property type="protein sequence ID" value="ENSRNOP00000069556.1"/>
    <property type="gene ID" value="ENSRNOG00000053640.2"/>
</dbReference>
<dbReference type="GeneID" id="307234"/>
<dbReference type="KEGG" id="rno:307234"/>
<dbReference type="AGR" id="RGD:1309521"/>
<dbReference type="CTD" id="26251"/>
<dbReference type="RGD" id="1309521">
    <property type="gene designation" value="Kcng2"/>
</dbReference>
<dbReference type="eggNOG" id="KOG3713">
    <property type="taxonomic scope" value="Eukaryota"/>
</dbReference>
<dbReference type="GeneTree" id="ENSGT00940000160858"/>
<dbReference type="HOGENOM" id="CLU_011722_4_1_1"/>
<dbReference type="InParanoid" id="Q9QYU3"/>
<dbReference type="OMA" id="FEREMVF"/>
<dbReference type="OrthoDB" id="83569at9989"/>
<dbReference type="PhylomeDB" id="Q9QYU3"/>
<dbReference type="Reactome" id="R-RNO-1296072">
    <property type="pathway name" value="Voltage gated Potassium channels"/>
</dbReference>
<dbReference type="Reactome" id="R-RNO-381676">
    <property type="pathway name" value="Glucagon-like Peptide-1 (GLP1) regulates insulin secretion"/>
</dbReference>
<dbReference type="PRO" id="PR:Q9QYU3"/>
<dbReference type="Proteomes" id="UP000002494">
    <property type="component" value="Chromosome 18"/>
</dbReference>
<dbReference type="Bgee" id="ENSRNOG00000053640">
    <property type="expression patterns" value="Expressed in heart and 15 other cell types or tissues"/>
</dbReference>
<dbReference type="GO" id="GO:0016020">
    <property type="term" value="C:membrane"/>
    <property type="evidence" value="ECO:0000318"/>
    <property type="project" value="GO_Central"/>
</dbReference>
<dbReference type="GO" id="GO:0008076">
    <property type="term" value="C:voltage-gated potassium channel complex"/>
    <property type="evidence" value="ECO:0000318"/>
    <property type="project" value="GO_Central"/>
</dbReference>
<dbReference type="GO" id="GO:0015459">
    <property type="term" value="F:potassium channel regulator activity"/>
    <property type="evidence" value="ECO:0000314"/>
    <property type="project" value="UniProtKB"/>
</dbReference>
<dbReference type="GO" id="GO:0005249">
    <property type="term" value="F:voltage-gated potassium channel activity"/>
    <property type="evidence" value="ECO:0007669"/>
    <property type="project" value="InterPro"/>
</dbReference>
<dbReference type="GO" id="GO:0001508">
    <property type="term" value="P:action potential"/>
    <property type="evidence" value="ECO:0000318"/>
    <property type="project" value="GO_Central"/>
</dbReference>
<dbReference type="GO" id="GO:0071805">
    <property type="term" value="P:potassium ion transmembrane transport"/>
    <property type="evidence" value="ECO:0000318"/>
    <property type="project" value="GO_Central"/>
</dbReference>
<dbReference type="GO" id="GO:0051260">
    <property type="term" value="P:protein homooligomerization"/>
    <property type="evidence" value="ECO:0007669"/>
    <property type="project" value="InterPro"/>
</dbReference>
<dbReference type="GO" id="GO:0043266">
    <property type="term" value="P:regulation of potassium ion transport"/>
    <property type="evidence" value="ECO:0000314"/>
    <property type="project" value="UniProtKB"/>
</dbReference>
<dbReference type="CDD" id="cd18382">
    <property type="entry name" value="BTB_POZ_Kv6_KCNG"/>
    <property type="match status" value="1"/>
</dbReference>
<dbReference type="FunFam" id="1.10.287.70:FF:000005">
    <property type="entry name" value="potassium voltage-gated channel subfamily G member 1"/>
    <property type="match status" value="1"/>
</dbReference>
<dbReference type="FunFam" id="1.20.120.350:FF:000085">
    <property type="entry name" value="potassium voltage-gated channel subfamily G member 2"/>
    <property type="match status" value="1"/>
</dbReference>
<dbReference type="FunFam" id="3.30.710.10:FF:000019">
    <property type="entry name" value="Potassium voltage-gated channel, subfamily G, member 1"/>
    <property type="match status" value="1"/>
</dbReference>
<dbReference type="Gene3D" id="1.10.287.70">
    <property type="match status" value="1"/>
</dbReference>
<dbReference type="Gene3D" id="3.30.710.10">
    <property type="entry name" value="Potassium Channel Kv1.1, Chain A"/>
    <property type="match status" value="1"/>
</dbReference>
<dbReference type="Gene3D" id="1.20.120.350">
    <property type="entry name" value="Voltage-gated potassium channels. Chain C"/>
    <property type="match status" value="1"/>
</dbReference>
<dbReference type="InterPro" id="IPR000210">
    <property type="entry name" value="BTB/POZ_dom"/>
</dbReference>
<dbReference type="InterPro" id="IPR005821">
    <property type="entry name" value="Ion_trans_dom"/>
</dbReference>
<dbReference type="InterPro" id="IPR003968">
    <property type="entry name" value="K_chnl_volt-dep_Kv"/>
</dbReference>
<dbReference type="InterPro" id="IPR003969">
    <property type="entry name" value="K_chnl_volt-dep_Kv6"/>
</dbReference>
<dbReference type="InterPro" id="IPR011333">
    <property type="entry name" value="SKP1/BTB/POZ_sf"/>
</dbReference>
<dbReference type="InterPro" id="IPR003131">
    <property type="entry name" value="T1-type_BTB"/>
</dbReference>
<dbReference type="InterPro" id="IPR028325">
    <property type="entry name" value="VG_K_chnl"/>
</dbReference>
<dbReference type="InterPro" id="IPR027359">
    <property type="entry name" value="Volt_channel_dom_sf"/>
</dbReference>
<dbReference type="PANTHER" id="PTHR11537:SF90">
    <property type="entry name" value="POTASSIUM VOLTAGE-GATED CHANNEL SUBFAMILY G MEMBER 2"/>
    <property type="match status" value="1"/>
</dbReference>
<dbReference type="PANTHER" id="PTHR11537">
    <property type="entry name" value="VOLTAGE-GATED POTASSIUM CHANNEL"/>
    <property type="match status" value="1"/>
</dbReference>
<dbReference type="Pfam" id="PF02214">
    <property type="entry name" value="BTB_2"/>
    <property type="match status" value="1"/>
</dbReference>
<dbReference type="Pfam" id="PF00520">
    <property type="entry name" value="Ion_trans"/>
    <property type="match status" value="1"/>
</dbReference>
<dbReference type="PRINTS" id="PR00169">
    <property type="entry name" value="KCHANNEL"/>
</dbReference>
<dbReference type="PRINTS" id="PR01492">
    <property type="entry name" value="KV6CHANNEL"/>
</dbReference>
<dbReference type="PRINTS" id="PR01491">
    <property type="entry name" value="KVCHANNEL"/>
</dbReference>
<dbReference type="SMART" id="SM00225">
    <property type="entry name" value="BTB"/>
    <property type="match status" value="1"/>
</dbReference>
<dbReference type="SUPFAM" id="SSF54695">
    <property type="entry name" value="POZ domain"/>
    <property type="match status" value="1"/>
</dbReference>
<dbReference type="SUPFAM" id="SSF81324">
    <property type="entry name" value="Voltage-gated potassium channels"/>
    <property type="match status" value="1"/>
</dbReference>
<sequence>MARLPGHPEVPGAEPGSAVRGGRGGRGARARHVIINVGGCRVRLAWAALARCPLARLERLRACRGHDELLRVCDDYDVSRDEFFFDRSPCAFRAIVALLRAGKLRLLRGPCALAFRDELAYWGIDEARLERCCLRRLRRREEEAAEARATPPARGPQTSPGRALGSGRLERGRRRLRDVVENPHSGLAGKLFAYVSVAFVAVTAVGLCLSTMPDVRAEEERGECSTKCRNLFVLETVCVAWFSFEFLLRSLQAESKCAFLRTPLAIIDILAILPFYVSLLAGLAAGPTGSKMLERAGLVLRLLRALRVLYVMRLARHSLGLRSLGLTVRRCAREFGLLLLFLCVAMALFAPLVHLAERELGAHRDFSSVPASYWWAVISMTTVGYGDMVPRSLPGQVVALSSILSGILLMAFPVTSIFHTFSRSYSELKEQQQRAASPEPVLREDSTRDDSTRSASATEDSSQDPETAGAAGSLPGPVGP</sequence>